<dbReference type="EC" id="6.1.1.11" evidence="1"/>
<dbReference type="EMBL" id="CP000300">
    <property type="protein sequence ID" value="ABE53191.1"/>
    <property type="molecule type" value="Genomic_DNA"/>
</dbReference>
<dbReference type="RefSeq" id="WP_011500326.1">
    <property type="nucleotide sequence ID" value="NC_007955.1"/>
</dbReference>
<dbReference type="SMR" id="Q12TN5"/>
<dbReference type="STRING" id="259564.Mbur_2337"/>
<dbReference type="GeneID" id="3998918"/>
<dbReference type="KEGG" id="mbu:Mbur_2337"/>
<dbReference type="HOGENOM" id="CLU_542524_0_0_2"/>
<dbReference type="OrthoDB" id="115981at2157"/>
<dbReference type="UniPathway" id="UPA00906">
    <property type="reaction ID" value="UER00895"/>
</dbReference>
<dbReference type="Proteomes" id="UP000001979">
    <property type="component" value="Chromosome"/>
</dbReference>
<dbReference type="GO" id="GO:0005737">
    <property type="term" value="C:cytoplasm"/>
    <property type="evidence" value="ECO:0007669"/>
    <property type="project" value="UniProtKB-SubCell"/>
</dbReference>
<dbReference type="GO" id="GO:0005524">
    <property type="term" value="F:ATP binding"/>
    <property type="evidence" value="ECO:0007669"/>
    <property type="project" value="UniProtKB-UniRule"/>
</dbReference>
<dbReference type="GO" id="GO:0004828">
    <property type="term" value="F:serine-tRNA ligase activity"/>
    <property type="evidence" value="ECO:0007669"/>
    <property type="project" value="UniProtKB-UniRule"/>
</dbReference>
<dbReference type="GO" id="GO:0008270">
    <property type="term" value="F:zinc ion binding"/>
    <property type="evidence" value="ECO:0007669"/>
    <property type="project" value="UniProtKB-UniRule"/>
</dbReference>
<dbReference type="GO" id="GO:0016260">
    <property type="term" value="P:selenocysteine biosynthetic process"/>
    <property type="evidence" value="ECO:0007669"/>
    <property type="project" value="UniProtKB-UniRule"/>
</dbReference>
<dbReference type="GO" id="GO:0006434">
    <property type="term" value="P:seryl-tRNA aminoacylation"/>
    <property type="evidence" value="ECO:0007669"/>
    <property type="project" value="UniProtKB-UniRule"/>
</dbReference>
<dbReference type="Gene3D" id="3.30.70.1920">
    <property type="match status" value="1"/>
</dbReference>
<dbReference type="Gene3D" id="3.30.930.10">
    <property type="entry name" value="Bira Bifunctional Protein, Domain 2"/>
    <property type="match status" value="1"/>
</dbReference>
<dbReference type="HAMAP" id="MF_01278">
    <property type="entry name" value="Ser_tRNA_synth_type2"/>
    <property type="match status" value="1"/>
</dbReference>
<dbReference type="InterPro" id="IPR045864">
    <property type="entry name" value="aa-tRNA-synth_II/BPL/LPL"/>
</dbReference>
<dbReference type="InterPro" id="IPR004503">
    <property type="entry name" value="Ser-tRNA-ligase_2_arc"/>
</dbReference>
<dbReference type="InterPro" id="IPR041293">
    <property type="entry name" value="SerS_tRNA-bd"/>
</dbReference>
<dbReference type="NCBIfam" id="NF002120">
    <property type="entry name" value="PRK00960.1"/>
    <property type="match status" value="1"/>
</dbReference>
<dbReference type="Pfam" id="PF18490">
    <property type="entry name" value="tRNA_bind_4"/>
    <property type="match status" value="1"/>
</dbReference>
<dbReference type="SUPFAM" id="SSF55681">
    <property type="entry name" value="Class II aaRS and biotin synthetases"/>
    <property type="match status" value="1"/>
</dbReference>
<accession>Q12TN5</accession>
<proteinExistence type="inferred from homology"/>
<protein>
    <recommendedName>
        <fullName evidence="1">Type-2 serine--tRNA ligase</fullName>
        <ecNumber evidence="1">6.1.1.11</ecNumber>
    </recommendedName>
    <alternativeName>
        <fullName evidence="1">Seryl-tRNA synthetase</fullName>
        <shortName evidence="1">SerRS</shortName>
    </alternativeName>
    <alternativeName>
        <fullName evidence="1">Seryl-tRNA(Ser/Sec) synthetase</fullName>
    </alternativeName>
</protein>
<gene>
    <name evidence="1" type="primary">serS</name>
    <name type="ordered locus">Mbur_2337</name>
</gene>
<sequence length="502" mass="57388">MELKFNLKGAFKTSTDPTGAKEVIAQYFDEANNTILKKGAPEGQGAKITQWDIVDGSIELTIESGRYVRAHDAIMRLKKPLAAKLGKEFRIGIRGVDVKKFTISMPAEGEIGNMNIPHVSNISKVEGGLILELNVGESELERRIPDRILTLMEEKVRAKDYGGKAEHWQILWESDKKEHTFAGDPTQEMMKHGWIKRGASRGQWIHGPQSTKMFRTFEKIVYDELLEPLGYREMIFPKLVPWEVWQKSGHAKGVYPEIYYVCPPKTRDPAYWEEVSDHYKVTHEVPTELIKSKIGDPIGGLCYAQCPPFWMYLQGETIPTDEFPIKVFDKSGTSHRYESGGIHGIERVDEFHRVEIVWLGTKEQVIETARKLHERYMHIFNEILDLEWRKAWVTPWFMAQEGLTGLSEQGEAGTTDYEAPLPYRGDDGEWLEFQNVSINGNKYPSGFNVKSQTGEELWSGCSGVGLERWASAFFAQKGLDPENWPEEFRKRVGEVPKGIRFL</sequence>
<name>SYS2_METBU</name>
<organism>
    <name type="scientific">Methanococcoides burtonii (strain DSM 6242 / NBRC 107633 / OCM 468 / ACE-M)</name>
    <dbReference type="NCBI Taxonomy" id="259564"/>
    <lineage>
        <taxon>Archaea</taxon>
        <taxon>Methanobacteriati</taxon>
        <taxon>Methanobacteriota</taxon>
        <taxon>Stenosarchaea group</taxon>
        <taxon>Methanomicrobia</taxon>
        <taxon>Methanosarcinales</taxon>
        <taxon>Methanosarcinaceae</taxon>
        <taxon>Methanococcoides</taxon>
    </lineage>
</organism>
<keyword id="KW-0030">Aminoacyl-tRNA synthetase</keyword>
<keyword id="KW-0067">ATP-binding</keyword>
<keyword id="KW-0963">Cytoplasm</keyword>
<keyword id="KW-0436">Ligase</keyword>
<keyword id="KW-0479">Metal-binding</keyword>
<keyword id="KW-0547">Nucleotide-binding</keyword>
<keyword id="KW-0648">Protein biosynthesis</keyword>
<keyword id="KW-0862">Zinc</keyword>
<reference key="1">
    <citation type="journal article" date="2009" name="ISME J.">
        <title>The genome sequence of the psychrophilic archaeon, Methanococcoides burtonii: the role of genome evolution in cold adaptation.</title>
        <authorList>
            <person name="Allen M.A."/>
            <person name="Lauro F.M."/>
            <person name="Williams T.J."/>
            <person name="Burg D."/>
            <person name="Siddiqui K.S."/>
            <person name="De Francisci D."/>
            <person name="Chong K.W."/>
            <person name="Pilak O."/>
            <person name="Chew H.H."/>
            <person name="De Maere M.Z."/>
            <person name="Ting L."/>
            <person name="Katrib M."/>
            <person name="Ng C."/>
            <person name="Sowers K.R."/>
            <person name="Galperin M.Y."/>
            <person name="Anderson I.J."/>
            <person name="Ivanova N."/>
            <person name="Dalin E."/>
            <person name="Martinez M."/>
            <person name="Lapidus A."/>
            <person name="Hauser L."/>
            <person name="Land M."/>
            <person name="Thomas T."/>
            <person name="Cavicchioli R."/>
        </authorList>
    </citation>
    <scope>NUCLEOTIDE SEQUENCE [LARGE SCALE GENOMIC DNA]</scope>
    <source>
        <strain>DSM 6242 / NBRC 107633 / OCM 468 / ACE-M</strain>
    </source>
</reference>
<comment type="function">
    <text evidence="1">Catalyzes the attachment of serine to tRNA(Ser). Is also able to aminoacylate tRNA(Sec) with serine, to form the misacylated tRNA L-seryl-tRNA(Sec), which will be further converted into selenocysteinyl-tRNA(Sec).</text>
</comment>
<comment type="catalytic activity">
    <reaction evidence="1">
        <text>tRNA(Ser) + L-serine + ATP = L-seryl-tRNA(Ser) + AMP + diphosphate + H(+)</text>
        <dbReference type="Rhea" id="RHEA:12292"/>
        <dbReference type="Rhea" id="RHEA-COMP:9669"/>
        <dbReference type="Rhea" id="RHEA-COMP:9703"/>
        <dbReference type="ChEBI" id="CHEBI:15378"/>
        <dbReference type="ChEBI" id="CHEBI:30616"/>
        <dbReference type="ChEBI" id="CHEBI:33019"/>
        <dbReference type="ChEBI" id="CHEBI:33384"/>
        <dbReference type="ChEBI" id="CHEBI:78442"/>
        <dbReference type="ChEBI" id="CHEBI:78533"/>
        <dbReference type="ChEBI" id="CHEBI:456215"/>
        <dbReference type="EC" id="6.1.1.11"/>
    </reaction>
</comment>
<comment type="catalytic activity">
    <reaction evidence="1">
        <text>tRNA(Sec) + L-serine + ATP = L-seryl-tRNA(Sec) + AMP + diphosphate + H(+)</text>
        <dbReference type="Rhea" id="RHEA:42580"/>
        <dbReference type="Rhea" id="RHEA-COMP:9742"/>
        <dbReference type="Rhea" id="RHEA-COMP:10128"/>
        <dbReference type="ChEBI" id="CHEBI:15378"/>
        <dbReference type="ChEBI" id="CHEBI:30616"/>
        <dbReference type="ChEBI" id="CHEBI:33019"/>
        <dbReference type="ChEBI" id="CHEBI:33384"/>
        <dbReference type="ChEBI" id="CHEBI:78442"/>
        <dbReference type="ChEBI" id="CHEBI:78533"/>
        <dbReference type="ChEBI" id="CHEBI:456215"/>
        <dbReference type="EC" id="6.1.1.11"/>
    </reaction>
</comment>
<comment type="cofactor">
    <cofactor evidence="1">
        <name>Zn(2+)</name>
        <dbReference type="ChEBI" id="CHEBI:29105"/>
    </cofactor>
    <text evidence="1">Binds 1 Zn(2+) ion per subunit. This ion is coordinated with 2 cysteines, 1 glutamate and a water molecule that dissociates from the zinc ion to allow the coordination of the amino group of the serine substrate, which is essential for catalysis.</text>
</comment>
<comment type="pathway">
    <text evidence="1">Aminoacyl-tRNA biosynthesis; selenocysteinyl-tRNA(Sec) biosynthesis; L-seryl-tRNA(Sec) from L-serine and tRNA(Sec): step 1/1.</text>
</comment>
<comment type="subunit">
    <text evidence="1">Homodimer.</text>
</comment>
<comment type="subcellular location">
    <subcellularLocation>
        <location evidence="1">Cytoplasm</location>
    </subcellularLocation>
</comment>
<comment type="domain">
    <text evidence="1">Consists of two distinct domains, a catalytic core and a N-terminal extension that is presumably involved in tRNA binding.</text>
</comment>
<comment type="similarity">
    <text evidence="1">Belongs to the class-II aminoacyl-tRNA synthetase family. Type-2 seryl-tRNA synthetase subfamily.</text>
</comment>
<evidence type="ECO:0000255" key="1">
    <source>
        <dbReference type="HAMAP-Rule" id="MF_01278"/>
    </source>
</evidence>
<feature type="chain" id="PRO_0000286168" description="Type-2 serine--tRNA ligase">
    <location>
        <begin position="1"/>
        <end position="502"/>
    </location>
</feature>
<feature type="binding site" evidence="1">
    <location>
        <position position="304"/>
    </location>
    <ligand>
        <name>L-serine</name>
        <dbReference type="ChEBI" id="CHEBI:33384"/>
    </ligand>
</feature>
<feature type="binding site" evidence="1">
    <location>
        <position position="306"/>
    </location>
    <ligand>
        <name>Zn(2+)</name>
        <dbReference type="ChEBI" id="CHEBI:29105"/>
        <note>catalytic</note>
    </ligand>
</feature>
<feature type="binding site" evidence="1">
    <location>
        <begin position="336"/>
        <end position="338"/>
    </location>
    <ligand>
        <name>ATP</name>
        <dbReference type="ChEBI" id="CHEBI:30616"/>
    </ligand>
</feature>
<feature type="binding site" evidence="1">
    <location>
        <position position="336"/>
    </location>
    <ligand>
        <name>L-serine</name>
        <dbReference type="ChEBI" id="CHEBI:33384"/>
    </ligand>
</feature>
<feature type="binding site" evidence="1">
    <location>
        <begin position="347"/>
        <end position="348"/>
    </location>
    <ligand>
        <name>ATP</name>
        <dbReference type="ChEBI" id="CHEBI:30616"/>
    </ligand>
</feature>
<feature type="binding site" evidence="1">
    <location>
        <begin position="353"/>
        <end position="355"/>
    </location>
    <ligand>
        <name>L-serine</name>
        <dbReference type="ChEBI" id="CHEBI:33384"/>
    </ligand>
</feature>
<feature type="binding site" evidence="1">
    <location>
        <position position="355"/>
    </location>
    <ligand>
        <name>Zn(2+)</name>
        <dbReference type="ChEBI" id="CHEBI:29105"/>
        <note>catalytic</note>
    </ligand>
</feature>
<feature type="binding site" evidence="1">
    <location>
        <position position="400"/>
    </location>
    <ligand>
        <name>L-serine</name>
        <dbReference type="ChEBI" id="CHEBI:33384"/>
    </ligand>
</feature>
<feature type="binding site" evidence="1">
    <location>
        <position position="432"/>
    </location>
    <ligand>
        <name>ATP</name>
        <dbReference type="ChEBI" id="CHEBI:30616"/>
    </ligand>
</feature>
<feature type="binding site" evidence="1">
    <location>
        <position position="435"/>
    </location>
    <ligand>
        <name>L-serine</name>
        <dbReference type="ChEBI" id="CHEBI:33384"/>
    </ligand>
</feature>
<feature type="binding site" evidence="1">
    <location>
        <position position="461"/>
    </location>
    <ligand>
        <name>Zn(2+)</name>
        <dbReference type="ChEBI" id="CHEBI:29105"/>
        <note>catalytic</note>
    </ligand>
</feature>
<feature type="binding site" evidence="1">
    <location>
        <position position="468"/>
    </location>
    <ligand>
        <name>ATP</name>
        <dbReference type="ChEBI" id="CHEBI:30616"/>
    </ligand>
</feature>